<name>ATPB_GEOSL</name>
<sequence>MSQNFGKISQVIGAVIDVEFEPGKLPPIYNALRVTNPAIDDKEYNLVLEVAQHLGENAVRTIAMDSTDGLVRGQAVLDTGKQISVPVGRKTLGRILNVIGEPVDEMGPVNAEKEYGIHREAPAFVDQSTKVEAFTTGIKVVDLLAPYARGGKIGLFGGAGVGKTVLIMELINNIAKQHGGFSVFAGVGERTREGNDLWMEMKESGVLDKAALVYGQMNEPPGARARVALSALSIAEYFRDEEGQNVLLFVDNIFRFTQAGSEVSALLGRIPSAVGYQPTLATEMGELQERITSTTKGSITSVQAIYVPADDLTDPAPATAFAHLDATTVLSRQIAELGIYPAVDPLDSTSRILDPQVIGEEHYSIARQVQYVLQKYKDLQDIIAILGMDELSEEDKLVVARARKIQRFLSQPFHVAEAFTGSPGKYVELKDTIKGFQEIVAGKHDDVPEQAFYMVGTIEEALEKAKKLAA</sequence>
<proteinExistence type="inferred from homology"/>
<organism>
    <name type="scientific">Geobacter sulfurreducens (strain ATCC 51573 / DSM 12127 / PCA)</name>
    <dbReference type="NCBI Taxonomy" id="243231"/>
    <lineage>
        <taxon>Bacteria</taxon>
        <taxon>Pseudomonadati</taxon>
        <taxon>Thermodesulfobacteriota</taxon>
        <taxon>Desulfuromonadia</taxon>
        <taxon>Geobacterales</taxon>
        <taxon>Geobacteraceae</taxon>
        <taxon>Geobacter</taxon>
    </lineage>
</organism>
<keyword id="KW-0066">ATP synthesis</keyword>
<keyword id="KW-0067">ATP-binding</keyword>
<keyword id="KW-0997">Cell inner membrane</keyword>
<keyword id="KW-1003">Cell membrane</keyword>
<keyword id="KW-0139">CF(1)</keyword>
<keyword id="KW-0375">Hydrogen ion transport</keyword>
<keyword id="KW-0406">Ion transport</keyword>
<keyword id="KW-0472">Membrane</keyword>
<keyword id="KW-0547">Nucleotide-binding</keyword>
<keyword id="KW-1185">Reference proteome</keyword>
<keyword id="KW-1278">Translocase</keyword>
<keyword id="KW-0813">Transport</keyword>
<reference key="1">
    <citation type="journal article" date="2003" name="Science">
        <title>Genome of Geobacter sulfurreducens: metal reduction in subsurface environments.</title>
        <authorList>
            <person name="Methe B.A."/>
            <person name="Nelson K.E."/>
            <person name="Eisen J.A."/>
            <person name="Paulsen I.T."/>
            <person name="Nelson W.C."/>
            <person name="Heidelberg J.F."/>
            <person name="Wu D."/>
            <person name="Wu M."/>
            <person name="Ward N.L."/>
            <person name="Beanan M.J."/>
            <person name="Dodson R.J."/>
            <person name="Madupu R."/>
            <person name="Brinkac L.M."/>
            <person name="Daugherty S.C."/>
            <person name="DeBoy R.T."/>
            <person name="Durkin A.S."/>
            <person name="Gwinn M.L."/>
            <person name="Kolonay J.F."/>
            <person name="Sullivan S.A."/>
            <person name="Haft D.H."/>
            <person name="Selengut J."/>
            <person name="Davidsen T.M."/>
            <person name="Zafar N."/>
            <person name="White O."/>
            <person name="Tran B."/>
            <person name="Romero C."/>
            <person name="Forberger H.A."/>
            <person name="Weidman J.F."/>
            <person name="Khouri H.M."/>
            <person name="Feldblyum T.V."/>
            <person name="Utterback T.R."/>
            <person name="Van Aken S.E."/>
            <person name="Lovley D.R."/>
            <person name="Fraser C.M."/>
        </authorList>
    </citation>
    <scope>NUCLEOTIDE SEQUENCE [LARGE SCALE GENOMIC DNA]</scope>
    <source>
        <strain>ATCC 51573 / DSM 12127 / PCA</strain>
    </source>
</reference>
<evidence type="ECO:0000255" key="1">
    <source>
        <dbReference type="HAMAP-Rule" id="MF_01347"/>
    </source>
</evidence>
<dbReference type="EC" id="7.1.2.2" evidence="1"/>
<dbReference type="EMBL" id="AE017180">
    <property type="protein sequence ID" value="AAR33448.1"/>
    <property type="molecule type" value="Genomic_DNA"/>
</dbReference>
<dbReference type="RefSeq" id="NP_951175.1">
    <property type="nucleotide sequence ID" value="NC_002939.5"/>
</dbReference>
<dbReference type="RefSeq" id="WP_010940789.1">
    <property type="nucleotide sequence ID" value="NC_002939.5"/>
</dbReference>
<dbReference type="SMR" id="Q74GY0"/>
<dbReference type="FunCoup" id="Q74GY0">
    <property type="interactions" value="467"/>
</dbReference>
<dbReference type="STRING" id="243231.GSU0113"/>
<dbReference type="EnsemblBacteria" id="AAR33448">
    <property type="protein sequence ID" value="AAR33448"/>
    <property type="gene ID" value="GSU0113"/>
</dbReference>
<dbReference type="KEGG" id="gsu:GSU0113"/>
<dbReference type="PATRIC" id="fig|243231.5.peg.113"/>
<dbReference type="eggNOG" id="COG0055">
    <property type="taxonomic scope" value="Bacteria"/>
</dbReference>
<dbReference type="HOGENOM" id="CLU_022398_0_2_7"/>
<dbReference type="InParanoid" id="Q74GY0"/>
<dbReference type="OrthoDB" id="9801639at2"/>
<dbReference type="Proteomes" id="UP000000577">
    <property type="component" value="Chromosome"/>
</dbReference>
<dbReference type="GO" id="GO:0005886">
    <property type="term" value="C:plasma membrane"/>
    <property type="evidence" value="ECO:0007669"/>
    <property type="project" value="UniProtKB-SubCell"/>
</dbReference>
<dbReference type="GO" id="GO:0045259">
    <property type="term" value="C:proton-transporting ATP synthase complex"/>
    <property type="evidence" value="ECO:0007669"/>
    <property type="project" value="UniProtKB-KW"/>
</dbReference>
<dbReference type="GO" id="GO:0005524">
    <property type="term" value="F:ATP binding"/>
    <property type="evidence" value="ECO:0007669"/>
    <property type="project" value="UniProtKB-UniRule"/>
</dbReference>
<dbReference type="GO" id="GO:0016887">
    <property type="term" value="F:ATP hydrolysis activity"/>
    <property type="evidence" value="ECO:0007669"/>
    <property type="project" value="InterPro"/>
</dbReference>
<dbReference type="GO" id="GO:0046933">
    <property type="term" value="F:proton-transporting ATP synthase activity, rotational mechanism"/>
    <property type="evidence" value="ECO:0007669"/>
    <property type="project" value="UniProtKB-UniRule"/>
</dbReference>
<dbReference type="CDD" id="cd18110">
    <property type="entry name" value="ATP-synt_F1_beta_C"/>
    <property type="match status" value="1"/>
</dbReference>
<dbReference type="CDD" id="cd18115">
    <property type="entry name" value="ATP-synt_F1_beta_N"/>
    <property type="match status" value="1"/>
</dbReference>
<dbReference type="CDD" id="cd01133">
    <property type="entry name" value="F1-ATPase_beta_CD"/>
    <property type="match status" value="1"/>
</dbReference>
<dbReference type="FunFam" id="1.10.1140.10:FF:000001">
    <property type="entry name" value="ATP synthase subunit beta"/>
    <property type="match status" value="1"/>
</dbReference>
<dbReference type="FunFam" id="2.40.10.170:FF:000005">
    <property type="entry name" value="ATP synthase subunit beta"/>
    <property type="match status" value="1"/>
</dbReference>
<dbReference type="FunFam" id="3.40.50.300:FF:000026">
    <property type="entry name" value="ATP synthase subunit beta"/>
    <property type="match status" value="1"/>
</dbReference>
<dbReference type="Gene3D" id="2.40.10.170">
    <property type="match status" value="1"/>
</dbReference>
<dbReference type="Gene3D" id="1.10.1140.10">
    <property type="entry name" value="Bovine Mitochondrial F1-atpase, Atp Synthase Beta Chain, Chain D, domain 3"/>
    <property type="match status" value="1"/>
</dbReference>
<dbReference type="Gene3D" id="3.40.50.300">
    <property type="entry name" value="P-loop containing nucleotide triphosphate hydrolases"/>
    <property type="match status" value="1"/>
</dbReference>
<dbReference type="HAMAP" id="MF_01347">
    <property type="entry name" value="ATP_synth_beta_bact"/>
    <property type="match status" value="1"/>
</dbReference>
<dbReference type="InterPro" id="IPR003593">
    <property type="entry name" value="AAA+_ATPase"/>
</dbReference>
<dbReference type="InterPro" id="IPR055190">
    <property type="entry name" value="ATP-synt_VA_C"/>
</dbReference>
<dbReference type="InterPro" id="IPR005722">
    <property type="entry name" value="ATP_synth_F1_bsu"/>
</dbReference>
<dbReference type="InterPro" id="IPR020003">
    <property type="entry name" value="ATPase_a/bsu_AS"/>
</dbReference>
<dbReference type="InterPro" id="IPR050053">
    <property type="entry name" value="ATPase_alpha/beta_chains"/>
</dbReference>
<dbReference type="InterPro" id="IPR004100">
    <property type="entry name" value="ATPase_F1/V1/A1_a/bsu_N"/>
</dbReference>
<dbReference type="InterPro" id="IPR036121">
    <property type="entry name" value="ATPase_F1/V1/A1_a/bsu_N_sf"/>
</dbReference>
<dbReference type="InterPro" id="IPR000194">
    <property type="entry name" value="ATPase_F1/V1/A1_a/bsu_nucl-bd"/>
</dbReference>
<dbReference type="InterPro" id="IPR024034">
    <property type="entry name" value="ATPase_F1/V1_b/a_C"/>
</dbReference>
<dbReference type="InterPro" id="IPR027417">
    <property type="entry name" value="P-loop_NTPase"/>
</dbReference>
<dbReference type="NCBIfam" id="TIGR01039">
    <property type="entry name" value="atpD"/>
    <property type="match status" value="1"/>
</dbReference>
<dbReference type="PANTHER" id="PTHR15184">
    <property type="entry name" value="ATP SYNTHASE"/>
    <property type="match status" value="1"/>
</dbReference>
<dbReference type="PANTHER" id="PTHR15184:SF71">
    <property type="entry name" value="ATP SYNTHASE SUBUNIT BETA, MITOCHONDRIAL"/>
    <property type="match status" value="1"/>
</dbReference>
<dbReference type="Pfam" id="PF00006">
    <property type="entry name" value="ATP-synt_ab"/>
    <property type="match status" value="1"/>
</dbReference>
<dbReference type="Pfam" id="PF02874">
    <property type="entry name" value="ATP-synt_ab_N"/>
    <property type="match status" value="1"/>
</dbReference>
<dbReference type="Pfam" id="PF22919">
    <property type="entry name" value="ATP-synt_VA_C"/>
    <property type="match status" value="1"/>
</dbReference>
<dbReference type="PIRSF" id="PIRSF039072">
    <property type="entry name" value="ATPase_subunit_beta"/>
    <property type="match status" value="1"/>
</dbReference>
<dbReference type="SMART" id="SM00382">
    <property type="entry name" value="AAA"/>
    <property type="match status" value="1"/>
</dbReference>
<dbReference type="SUPFAM" id="SSF47917">
    <property type="entry name" value="C-terminal domain of alpha and beta subunits of F1 ATP synthase"/>
    <property type="match status" value="1"/>
</dbReference>
<dbReference type="SUPFAM" id="SSF50615">
    <property type="entry name" value="N-terminal domain of alpha and beta subunits of F1 ATP synthase"/>
    <property type="match status" value="1"/>
</dbReference>
<dbReference type="SUPFAM" id="SSF52540">
    <property type="entry name" value="P-loop containing nucleoside triphosphate hydrolases"/>
    <property type="match status" value="1"/>
</dbReference>
<dbReference type="PROSITE" id="PS00152">
    <property type="entry name" value="ATPASE_ALPHA_BETA"/>
    <property type="match status" value="1"/>
</dbReference>
<comment type="function">
    <text evidence="1">Produces ATP from ADP in the presence of a proton gradient across the membrane. The catalytic sites are hosted primarily by the beta subunits.</text>
</comment>
<comment type="catalytic activity">
    <reaction evidence="1">
        <text>ATP + H2O + 4 H(+)(in) = ADP + phosphate + 5 H(+)(out)</text>
        <dbReference type="Rhea" id="RHEA:57720"/>
        <dbReference type="ChEBI" id="CHEBI:15377"/>
        <dbReference type="ChEBI" id="CHEBI:15378"/>
        <dbReference type="ChEBI" id="CHEBI:30616"/>
        <dbReference type="ChEBI" id="CHEBI:43474"/>
        <dbReference type="ChEBI" id="CHEBI:456216"/>
        <dbReference type="EC" id="7.1.2.2"/>
    </reaction>
</comment>
<comment type="subunit">
    <text evidence="1">F-type ATPases have 2 components, CF(1) - the catalytic core - and CF(0) - the membrane proton channel. CF(1) has five subunits: alpha(3), beta(3), gamma(1), delta(1), epsilon(1). CF(0) has three main subunits: a(1), b(2) and c(9-12). The alpha and beta chains form an alternating ring which encloses part of the gamma chain. CF(1) is attached to CF(0) by a central stalk formed by the gamma and epsilon chains, while a peripheral stalk is formed by the delta and b chains.</text>
</comment>
<comment type="subcellular location">
    <subcellularLocation>
        <location evidence="1">Cell inner membrane</location>
        <topology evidence="1">Peripheral membrane protein</topology>
    </subcellularLocation>
</comment>
<comment type="similarity">
    <text evidence="1">Belongs to the ATPase alpha/beta chains family.</text>
</comment>
<protein>
    <recommendedName>
        <fullName evidence="1">ATP synthase subunit beta</fullName>
        <ecNumber evidence="1">7.1.2.2</ecNumber>
    </recommendedName>
    <alternativeName>
        <fullName evidence="1">ATP synthase F1 sector subunit beta</fullName>
    </alternativeName>
    <alternativeName>
        <fullName evidence="1">F-ATPase subunit beta</fullName>
    </alternativeName>
</protein>
<feature type="chain" id="PRO_0000254269" description="ATP synthase subunit beta">
    <location>
        <begin position="1"/>
        <end position="470"/>
    </location>
</feature>
<feature type="binding site" evidence="1">
    <location>
        <begin position="157"/>
        <end position="164"/>
    </location>
    <ligand>
        <name>ATP</name>
        <dbReference type="ChEBI" id="CHEBI:30616"/>
    </ligand>
</feature>
<gene>
    <name evidence="1" type="primary">atpD</name>
    <name type="ordered locus">GSU0113</name>
</gene>
<accession>Q74GY0</accession>